<organism>
    <name type="scientific">Clostridioides difficile (strain 630)</name>
    <name type="common">Peptoclostridium difficile</name>
    <dbReference type="NCBI Taxonomy" id="272563"/>
    <lineage>
        <taxon>Bacteria</taxon>
        <taxon>Bacillati</taxon>
        <taxon>Bacillota</taxon>
        <taxon>Clostridia</taxon>
        <taxon>Peptostreptococcales</taxon>
        <taxon>Peptostreptococcaceae</taxon>
        <taxon>Clostridioides</taxon>
    </lineage>
</organism>
<sequence length="287" mass="30913">MSTKGQIIKGKPVADKISEELIKEVDLLVKEGINPKLTIVRVGARSDDLSYERGALKRCQNIGITTEVLELAEDITQEEYIDVLKRVNDDKNVNGILCFRPLPKHLNEEVIKYVIAPEKDVDCFSPINSAKVMEGDKSGFPPCTPTAVVEILKHYNVDLKGSKVTVLGRSMVVGKPVSMLLLSEHATVTICHSKTKNLSGVAAEADVLIAAIGRAKMVDESFVKDGAVVIDVGINVDEEGNLCGDVDTNAVLDKVSMITPVPAGVGSVTTSILAKHVVKACKLQNNK</sequence>
<comment type="function">
    <text evidence="1">Catalyzes the oxidation of 5,10-methylenetetrahydrofolate to 5,10-methenyltetrahydrofolate and then the hydrolysis of 5,10-methenyltetrahydrofolate to 10-formyltetrahydrofolate.</text>
</comment>
<comment type="catalytic activity">
    <reaction evidence="1">
        <text>(6R)-5,10-methylene-5,6,7,8-tetrahydrofolate + NADP(+) = (6R)-5,10-methenyltetrahydrofolate + NADPH</text>
        <dbReference type="Rhea" id="RHEA:22812"/>
        <dbReference type="ChEBI" id="CHEBI:15636"/>
        <dbReference type="ChEBI" id="CHEBI:57455"/>
        <dbReference type="ChEBI" id="CHEBI:57783"/>
        <dbReference type="ChEBI" id="CHEBI:58349"/>
        <dbReference type="EC" id="1.5.1.5"/>
    </reaction>
</comment>
<comment type="catalytic activity">
    <reaction evidence="1">
        <text>(6R)-5,10-methenyltetrahydrofolate + H2O = (6R)-10-formyltetrahydrofolate + H(+)</text>
        <dbReference type="Rhea" id="RHEA:23700"/>
        <dbReference type="ChEBI" id="CHEBI:15377"/>
        <dbReference type="ChEBI" id="CHEBI:15378"/>
        <dbReference type="ChEBI" id="CHEBI:57455"/>
        <dbReference type="ChEBI" id="CHEBI:195366"/>
        <dbReference type="EC" id="3.5.4.9"/>
    </reaction>
</comment>
<comment type="pathway">
    <text evidence="1">One-carbon metabolism; tetrahydrofolate interconversion.</text>
</comment>
<comment type="subunit">
    <text evidence="1">Homodimer.</text>
</comment>
<comment type="similarity">
    <text evidence="1">Belongs to the tetrahydrofolate dehydrogenase/cyclohydrolase family.</text>
</comment>
<accession>Q189R8</accession>
<keyword id="KW-0028">Amino-acid biosynthesis</keyword>
<keyword id="KW-0368">Histidine biosynthesis</keyword>
<keyword id="KW-0378">Hydrolase</keyword>
<keyword id="KW-0486">Methionine biosynthesis</keyword>
<keyword id="KW-0511">Multifunctional enzyme</keyword>
<keyword id="KW-0521">NADP</keyword>
<keyword id="KW-0554">One-carbon metabolism</keyword>
<keyword id="KW-0560">Oxidoreductase</keyword>
<keyword id="KW-0658">Purine biosynthesis</keyword>
<keyword id="KW-1185">Reference proteome</keyword>
<dbReference type="EC" id="1.5.1.5" evidence="1"/>
<dbReference type="EC" id="3.5.4.9" evidence="1"/>
<dbReference type="EMBL" id="AM180355">
    <property type="protein sequence ID" value="CAJ67554.2"/>
    <property type="molecule type" value="Genomic_DNA"/>
</dbReference>
<dbReference type="RefSeq" id="YP_001087197.2">
    <property type="nucleotide sequence ID" value="NC_009089.1"/>
</dbReference>
<dbReference type="SMR" id="Q189R8"/>
<dbReference type="STRING" id="272563.CD630_07200"/>
<dbReference type="EnsemblBacteria" id="CAJ67554">
    <property type="protein sequence ID" value="CAJ67554"/>
    <property type="gene ID" value="CD630_07200"/>
</dbReference>
<dbReference type="KEGG" id="cdf:CD630_07200"/>
<dbReference type="PATRIC" id="fig|272563.8.peg.757"/>
<dbReference type="eggNOG" id="COG0190">
    <property type="taxonomic scope" value="Bacteria"/>
</dbReference>
<dbReference type="OrthoDB" id="9803580at2"/>
<dbReference type="PhylomeDB" id="Q189R8"/>
<dbReference type="BioCyc" id="PDIF272563:G12WB-831-MONOMER"/>
<dbReference type="UniPathway" id="UPA00193"/>
<dbReference type="Proteomes" id="UP000001978">
    <property type="component" value="Chromosome"/>
</dbReference>
<dbReference type="GO" id="GO:0005829">
    <property type="term" value="C:cytosol"/>
    <property type="evidence" value="ECO:0007669"/>
    <property type="project" value="TreeGrafter"/>
</dbReference>
<dbReference type="GO" id="GO:0004477">
    <property type="term" value="F:methenyltetrahydrofolate cyclohydrolase activity"/>
    <property type="evidence" value="ECO:0007669"/>
    <property type="project" value="UniProtKB-UniRule"/>
</dbReference>
<dbReference type="GO" id="GO:0004488">
    <property type="term" value="F:methylenetetrahydrofolate dehydrogenase (NADP+) activity"/>
    <property type="evidence" value="ECO:0007669"/>
    <property type="project" value="UniProtKB-UniRule"/>
</dbReference>
<dbReference type="GO" id="GO:0000105">
    <property type="term" value="P:L-histidine biosynthetic process"/>
    <property type="evidence" value="ECO:0007669"/>
    <property type="project" value="UniProtKB-KW"/>
</dbReference>
<dbReference type="GO" id="GO:0009086">
    <property type="term" value="P:methionine biosynthetic process"/>
    <property type="evidence" value="ECO:0007669"/>
    <property type="project" value="UniProtKB-KW"/>
</dbReference>
<dbReference type="GO" id="GO:0006164">
    <property type="term" value="P:purine nucleotide biosynthetic process"/>
    <property type="evidence" value="ECO:0007669"/>
    <property type="project" value="UniProtKB-KW"/>
</dbReference>
<dbReference type="GO" id="GO:0035999">
    <property type="term" value="P:tetrahydrofolate interconversion"/>
    <property type="evidence" value="ECO:0007669"/>
    <property type="project" value="UniProtKB-UniRule"/>
</dbReference>
<dbReference type="CDD" id="cd01080">
    <property type="entry name" value="NAD_bind_m-THF_DH_Cyclohyd"/>
    <property type="match status" value="1"/>
</dbReference>
<dbReference type="FunFam" id="3.40.50.720:FF:000094">
    <property type="entry name" value="Bifunctional protein FolD"/>
    <property type="match status" value="1"/>
</dbReference>
<dbReference type="FunFam" id="3.40.50.10860:FF:000005">
    <property type="entry name" value="C-1-tetrahydrofolate synthase, cytoplasmic, putative"/>
    <property type="match status" value="1"/>
</dbReference>
<dbReference type="Gene3D" id="3.40.50.10860">
    <property type="entry name" value="Leucine Dehydrogenase, chain A, domain 1"/>
    <property type="match status" value="1"/>
</dbReference>
<dbReference type="Gene3D" id="3.40.50.720">
    <property type="entry name" value="NAD(P)-binding Rossmann-like Domain"/>
    <property type="match status" value="1"/>
</dbReference>
<dbReference type="HAMAP" id="MF_01576">
    <property type="entry name" value="THF_DHG_CYH"/>
    <property type="match status" value="1"/>
</dbReference>
<dbReference type="InterPro" id="IPR046346">
    <property type="entry name" value="Aminoacid_DH-like_N_sf"/>
</dbReference>
<dbReference type="InterPro" id="IPR036291">
    <property type="entry name" value="NAD(P)-bd_dom_sf"/>
</dbReference>
<dbReference type="InterPro" id="IPR000672">
    <property type="entry name" value="THF_DH/CycHdrlase"/>
</dbReference>
<dbReference type="InterPro" id="IPR020630">
    <property type="entry name" value="THF_DH/CycHdrlase_cat_dom"/>
</dbReference>
<dbReference type="InterPro" id="IPR020631">
    <property type="entry name" value="THF_DH/CycHdrlase_NAD-bd_dom"/>
</dbReference>
<dbReference type="PANTHER" id="PTHR48099:SF5">
    <property type="entry name" value="C-1-TETRAHYDROFOLATE SYNTHASE, CYTOPLASMIC"/>
    <property type="match status" value="1"/>
</dbReference>
<dbReference type="PANTHER" id="PTHR48099">
    <property type="entry name" value="C-1-TETRAHYDROFOLATE SYNTHASE, CYTOPLASMIC-RELATED"/>
    <property type="match status" value="1"/>
</dbReference>
<dbReference type="Pfam" id="PF00763">
    <property type="entry name" value="THF_DHG_CYH"/>
    <property type="match status" value="1"/>
</dbReference>
<dbReference type="Pfam" id="PF02882">
    <property type="entry name" value="THF_DHG_CYH_C"/>
    <property type="match status" value="1"/>
</dbReference>
<dbReference type="PRINTS" id="PR00085">
    <property type="entry name" value="THFDHDRGNASE"/>
</dbReference>
<dbReference type="SUPFAM" id="SSF53223">
    <property type="entry name" value="Aminoacid dehydrogenase-like, N-terminal domain"/>
    <property type="match status" value="1"/>
</dbReference>
<dbReference type="SUPFAM" id="SSF51735">
    <property type="entry name" value="NAD(P)-binding Rossmann-fold domains"/>
    <property type="match status" value="1"/>
</dbReference>
<feature type="chain" id="PRO_0000268316" description="Bifunctional protein FolD">
    <location>
        <begin position="1"/>
        <end position="287"/>
    </location>
</feature>
<feature type="binding site" evidence="1">
    <location>
        <begin position="168"/>
        <end position="170"/>
    </location>
    <ligand>
        <name>NADP(+)</name>
        <dbReference type="ChEBI" id="CHEBI:58349"/>
    </ligand>
</feature>
<feature type="binding site" evidence="1">
    <location>
        <position position="193"/>
    </location>
    <ligand>
        <name>NADP(+)</name>
        <dbReference type="ChEBI" id="CHEBI:58349"/>
    </ligand>
</feature>
<feature type="binding site" evidence="1">
    <location>
        <position position="234"/>
    </location>
    <ligand>
        <name>NADP(+)</name>
        <dbReference type="ChEBI" id="CHEBI:58349"/>
    </ligand>
</feature>
<protein>
    <recommendedName>
        <fullName evidence="1">Bifunctional protein FolD</fullName>
    </recommendedName>
    <domain>
        <recommendedName>
            <fullName evidence="1">Methylenetetrahydrofolate dehydrogenase</fullName>
            <ecNumber evidence="1">1.5.1.5</ecNumber>
        </recommendedName>
    </domain>
    <domain>
        <recommendedName>
            <fullName evidence="1">Methenyltetrahydrofolate cyclohydrolase</fullName>
            <ecNumber evidence="1">3.5.4.9</ecNumber>
        </recommendedName>
    </domain>
</protein>
<evidence type="ECO:0000255" key="1">
    <source>
        <dbReference type="HAMAP-Rule" id="MF_01576"/>
    </source>
</evidence>
<reference key="1">
    <citation type="journal article" date="2006" name="Nat. Genet.">
        <title>The multidrug-resistant human pathogen Clostridium difficile has a highly mobile, mosaic genome.</title>
        <authorList>
            <person name="Sebaihia M."/>
            <person name="Wren B.W."/>
            <person name="Mullany P."/>
            <person name="Fairweather N.F."/>
            <person name="Minton N."/>
            <person name="Stabler R."/>
            <person name="Thomson N.R."/>
            <person name="Roberts A.P."/>
            <person name="Cerdeno-Tarraga A.M."/>
            <person name="Wang H."/>
            <person name="Holden M.T.G."/>
            <person name="Wright A."/>
            <person name="Churcher C."/>
            <person name="Quail M.A."/>
            <person name="Baker S."/>
            <person name="Bason N."/>
            <person name="Brooks K."/>
            <person name="Chillingworth T."/>
            <person name="Cronin A."/>
            <person name="Davis P."/>
            <person name="Dowd L."/>
            <person name="Fraser A."/>
            <person name="Feltwell T."/>
            <person name="Hance Z."/>
            <person name="Holroyd S."/>
            <person name="Jagels K."/>
            <person name="Moule S."/>
            <person name="Mungall K."/>
            <person name="Price C."/>
            <person name="Rabbinowitsch E."/>
            <person name="Sharp S."/>
            <person name="Simmonds M."/>
            <person name="Stevens K."/>
            <person name="Unwin L."/>
            <person name="Whithead S."/>
            <person name="Dupuy B."/>
            <person name="Dougan G."/>
            <person name="Barrell B."/>
            <person name="Parkhill J."/>
        </authorList>
    </citation>
    <scope>NUCLEOTIDE SEQUENCE [LARGE SCALE GENOMIC DNA]</scope>
    <source>
        <strain>630</strain>
    </source>
</reference>
<name>FOLD_CLOD6</name>
<proteinExistence type="inferred from homology"/>
<gene>
    <name evidence="1" type="primary">folD</name>
    <name type="ordered locus">CD630_07200</name>
</gene>